<accession>A4JKF7</accession>
<sequence length="246" mass="27323">MKPSDVRSKAFAMPLTSPAFPMGPYRFVDREFVIITYRTDPERLRAVVPEPLQIAEPLVHYEFIRMADSTGFGDYTESGQVIPVEYNGQAGGYTLAMYLDDHPPIAGGRELWGFPKKLASPTLHVNTDHILGTLDYGKVRVATGTMGYKHKELDLDEQMKRLAGPNFLLKIIPHVDGSARVCELVRYYLQDIKMKGAWTGPASLELAPHALAPVADLPVLEIVEARHIVADLTLGLGEVVYDYLAQ</sequence>
<dbReference type="EC" id="4.1.1.4" evidence="1"/>
<dbReference type="EMBL" id="CP000615">
    <property type="protein sequence ID" value="ABO56760.1"/>
    <property type="molecule type" value="Genomic_DNA"/>
</dbReference>
<dbReference type="SMR" id="A4JKF7"/>
<dbReference type="KEGG" id="bvi:Bcep1808_3777"/>
<dbReference type="eggNOG" id="COG4689">
    <property type="taxonomic scope" value="Bacteria"/>
</dbReference>
<dbReference type="HOGENOM" id="CLU_077089_0_0_4"/>
<dbReference type="Proteomes" id="UP000002287">
    <property type="component" value="Chromosome 2"/>
</dbReference>
<dbReference type="GO" id="GO:0047602">
    <property type="term" value="F:acetoacetate decarboxylase activity"/>
    <property type="evidence" value="ECO:0007669"/>
    <property type="project" value="UniProtKB-UniRule"/>
</dbReference>
<dbReference type="Gene3D" id="2.40.400.10">
    <property type="entry name" value="Acetoacetate decarboxylase-like"/>
    <property type="match status" value="1"/>
</dbReference>
<dbReference type="HAMAP" id="MF_00597">
    <property type="entry name" value="ADC"/>
    <property type="match status" value="1"/>
</dbReference>
<dbReference type="InterPro" id="IPR010451">
    <property type="entry name" value="Acetoacetate_decarboxylase"/>
</dbReference>
<dbReference type="InterPro" id="IPR023653">
    <property type="entry name" value="Acetoacetate_decarboxylase_bac"/>
</dbReference>
<dbReference type="InterPro" id="IPR023375">
    <property type="entry name" value="ADC_dom_sf"/>
</dbReference>
<dbReference type="NCBIfam" id="NF002614">
    <property type="entry name" value="PRK02265.1"/>
    <property type="match status" value="1"/>
</dbReference>
<dbReference type="Pfam" id="PF06314">
    <property type="entry name" value="ADC"/>
    <property type="match status" value="1"/>
</dbReference>
<dbReference type="SUPFAM" id="SSF160104">
    <property type="entry name" value="Acetoacetate decarboxylase-like"/>
    <property type="match status" value="1"/>
</dbReference>
<comment type="function">
    <text evidence="1">Catalyzes the conversion of acetoacetate to acetone and carbon dioxide.</text>
</comment>
<comment type="catalytic activity">
    <reaction evidence="1">
        <text>acetoacetate + H(+) = acetone + CO2</text>
        <dbReference type="Rhea" id="RHEA:19729"/>
        <dbReference type="ChEBI" id="CHEBI:13705"/>
        <dbReference type="ChEBI" id="CHEBI:15347"/>
        <dbReference type="ChEBI" id="CHEBI:15378"/>
        <dbReference type="ChEBI" id="CHEBI:16526"/>
        <dbReference type="EC" id="4.1.1.4"/>
    </reaction>
</comment>
<comment type="similarity">
    <text evidence="1">Belongs to the ADC family.</text>
</comment>
<gene>
    <name evidence="1" type="primary">adc</name>
    <name type="ordered locus">Bcep1808_3777</name>
</gene>
<reference key="1">
    <citation type="submission" date="2007-03" db="EMBL/GenBank/DDBJ databases">
        <title>Complete sequence of chromosome 2 of Burkholderia vietnamiensis G4.</title>
        <authorList>
            <consortium name="US DOE Joint Genome Institute"/>
            <person name="Copeland A."/>
            <person name="Lucas S."/>
            <person name="Lapidus A."/>
            <person name="Barry K."/>
            <person name="Detter J.C."/>
            <person name="Glavina del Rio T."/>
            <person name="Hammon N."/>
            <person name="Israni S."/>
            <person name="Dalin E."/>
            <person name="Tice H."/>
            <person name="Pitluck S."/>
            <person name="Chain P."/>
            <person name="Malfatti S."/>
            <person name="Shin M."/>
            <person name="Vergez L."/>
            <person name="Schmutz J."/>
            <person name="Larimer F."/>
            <person name="Land M."/>
            <person name="Hauser L."/>
            <person name="Kyrpides N."/>
            <person name="Tiedje J."/>
            <person name="Richardson P."/>
        </authorList>
    </citation>
    <scope>NUCLEOTIDE SEQUENCE [LARGE SCALE GENOMIC DNA]</scope>
    <source>
        <strain>G4 / LMG 22486</strain>
    </source>
</reference>
<feature type="chain" id="PRO_1000025640" description="Acetoacetate decarboxylase">
    <location>
        <begin position="1"/>
        <end position="246"/>
    </location>
</feature>
<feature type="active site" description="Schiff-base intermediate with acetoacetate" evidence="1">
    <location>
        <position position="116"/>
    </location>
</feature>
<organism>
    <name type="scientific">Burkholderia vietnamiensis (strain G4 / LMG 22486)</name>
    <name type="common">Burkholderia cepacia (strain R1808)</name>
    <dbReference type="NCBI Taxonomy" id="269482"/>
    <lineage>
        <taxon>Bacteria</taxon>
        <taxon>Pseudomonadati</taxon>
        <taxon>Pseudomonadota</taxon>
        <taxon>Betaproteobacteria</taxon>
        <taxon>Burkholderiales</taxon>
        <taxon>Burkholderiaceae</taxon>
        <taxon>Burkholderia</taxon>
        <taxon>Burkholderia cepacia complex</taxon>
    </lineage>
</organism>
<evidence type="ECO:0000255" key="1">
    <source>
        <dbReference type="HAMAP-Rule" id="MF_00597"/>
    </source>
</evidence>
<proteinExistence type="inferred from homology"/>
<keyword id="KW-0210">Decarboxylase</keyword>
<keyword id="KW-0456">Lyase</keyword>
<keyword id="KW-0704">Schiff base</keyword>
<protein>
    <recommendedName>
        <fullName evidence="1">Acetoacetate decarboxylase</fullName>
        <shortName evidence="1">AAD</shortName>
        <shortName evidence="1">ADC</shortName>
        <ecNumber evidence="1">4.1.1.4</ecNumber>
    </recommendedName>
</protein>
<name>ADC_BURVG</name>